<name>SEC31_YARLI</name>
<protein>
    <recommendedName>
        <fullName>Protein transport protein SEC31</fullName>
    </recommendedName>
</protein>
<dbReference type="EMBL" id="AY084034">
    <property type="protein sequence ID" value="AAM09808.1"/>
    <property type="status" value="ALT_SEQ"/>
    <property type="molecule type" value="Genomic_DNA"/>
</dbReference>
<dbReference type="EMBL" id="CR382131">
    <property type="protein sequence ID" value="CAG80202.1"/>
    <property type="molecule type" value="Genomic_DNA"/>
</dbReference>
<dbReference type="RefSeq" id="XP_504598.1">
    <property type="nucleotide sequence ID" value="XM_504598.1"/>
</dbReference>
<dbReference type="SMR" id="Q6C414"/>
<dbReference type="FunCoup" id="Q6C414">
    <property type="interactions" value="748"/>
</dbReference>
<dbReference type="STRING" id="284591.Q6C414"/>
<dbReference type="EnsemblFungi" id="CAG80202">
    <property type="protein sequence ID" value="CAG80202"/>
    <property type="gene ID" value="YALI0_E30635g"/>
</dbReference>
<dbReference type="KEGG" id="yli:2911749"/>
<dbReference type="VEuPathDB" id="FungiDB:YALI0_E30635g"/>
<dbReference type="HOGENOM" id="CLU_003033_2_0_1"/>
<dbReference type="InParanoid" id="Q6C414"/>
<dbReference type="OMA" id="WLERPCG"/>
<dbReference type="OrthoDB" id="2947at4891"/>
<dbReference type="Proteomes" id="UP000001300">
    <property type="component" value="Chromosome E"/>
</dbReference>
<dbReference type="GO" id="GO:0030127">
    <property type="term" value="C:COPII vesicle coat"/>
    <property type="evidence" value="ECO:0000318"/>
    <property type="project" value="GO_Central"/>
</dbReference>
<dbReference type="GO" id="GO:0070971">
    <property type="term" value="C:endoplasmic reticulum exit site"/>
    <property type="evidence" value="ECO:0000318"/>
    <property type="project" value="GO_Central"/>
</dbReference>
<dbReference type="GO" id="GO:0005789">
    <property type="term" value="C:endoplasmic reticulum membrane"/>
    <property type="evidence" value="ECO:0007669"/>
    <property type="project" value="UniProtKB-SubCell"/>
</dbReference>
<dbReference type="GO" id="GO:0005198">
    <property type="term" value="F:structural molecule activity"/>
    <property type="evidence" value="ECO:0000318"/>
    <property type="project" value="GO_Central"/>
</dbReference>
<dbReference type="GO" id="GO:0090110">
    <property type="term" value="P:COPII-coated vesicle cargo loading"/>
    <property type="evidence" value="ECO:0000318"/>
    <property type="project" value="GO_Central"/>
</dbReference>
<dbReference type="GO" id="GO:0007029">
    <property type="term" value="P:endoplasmic reticulum organization"/>
    <property type="evidence" value="ECO:0000318"/>
    <property type="project" value="GO_Central"/>
</dbReference>
<dbReference type="GO" id="GO:1902953">
    <property type="term" value="P:positive regulation of ER to Golgi vesicle-mediated transport"/>
    <property type="evidence" value="ECO:0007669"/>
    <property type="project" value="EnsemblFungi"/>
</dbReference>
<dbReference type="GO" id="GO:0070863">
    <property type="term" value="P:positive regulation of protein exit from endoplasmic reticulum"/>
    <property type="evidence" value="ECO:0007669"/>
    <property type="project" value="EnsemblFungi"/>
</dbReference>
<dbReference type="GO" id="GO:0015031">
    <property type="term" value="P:protein transport"/>
    <property type="evidence" value="ECO:0007669"/>
    <property type="project" value="UniProtKB-KW"/>
</dbReference>
<dbReference type="FunFam" id="1.20.940.10:FF:000007">
    <property type="entry name" value="Protein transport protein (SEC31), putative"/>
    <property type="match status" value="1"/>
</dbReference>
<dbReference type="FunFam" id="2.130.10.10:FF:000526">
    <property type="entry name" value="Protein transport protein SEC31"/>
    <property type="match status" value="1"/>
</dbReference>
<dbReference type="Gene3D" id="1.25.40.1030">
    <property type="match status" value="1"/>
</dbReference>
<dbReference type="Gene3D" id="1.20.940.10">
    <property type="entry name" value="Functional domain of the splicing factor Prp18"/>
    <property type="match status" value="1"/>
</dbReference>
<dbReference type="Gene3D" id="2.130.10.10">
    <property type="entry name" value="YVTN repeat-like/Quinoprotein amine dehydrogenase"/>
    <property type="match status" value="1"/>
</dbReference>
<dbReference type="InterPro" id="IPR040251">
    <property type="entry name" value="SEC31-like"/>
</dbReference>
<dbReference type="InterPro" id="IPR015943">
    <property type="entry name" value="WD40/YVTN_repeat-like_dom_sf"/>
</dbReference>
<dbReference type="InterPro" id="IPR036322">
    <property type="entry name" value="WD40_repeat_dom_sf"/>
</dbReference>
<dbReference type="InterPro" id="IPR001680">
    <property type="entry name" value="WD40_rpt"/>
</dbReference>
<dbReference type="PANTHER" id="PTHR13923">
    <property type="entry name" value="SEC31-RELATED PROTEIN"/>
    <property type="match status" value="1"/>
</dbReference>
<dbReference type="PANTHER" id="PTHR13923:SF11">
    <property type="entry name" value="SECRETORY 31, ISOFORM D"/>
    <property type="match status" value="1"/>
</dbReference>
<dbReference type="Pfam" id="PF00400">
    <property type="entry name" value="WD40"/>
    <property type="match status" value="2"/>
</dbReference>
<dbReference type="SMART" id="SM00320">
    <property type="entry name" value="WD40"/>
    <property type="match status" value="6"/>
</dbReference>
<dbReference type="SUPFAM" id="SSF50978">
    <property type="entry name" value="WD40 repeat-like"/>
    <property type="match status" value="1"/>
</dbReference>
<dbReference type="PROSITE" id="PS00678">
    <property type="entry name" value="WD_REPEATS_1"/>
    <property type="match status" value="2"/>
</dbReference>
<dbReference type="PROSITE" id="PS50082">
    <property type="entry name" value="WD_REPEATS_2"/>
    <property type="match status" value="2"/>
</dbReference>
<dbReference type="PROSITE" id="PS50294">
    <property type="entry name" value="WD_REPEATS_REGION"/>
    <property type="match status" value="1"/>
</dbReference>
<organism>
    <name type="scientific">Yarrowia lipolytica (strain CLIB 122 / E 150)</name>
    <name type="common">Yeast</name>
    <name type="synonym">Candida lipolytica</name>
    <dbReference type="NCBI Taxonomy" id="284591"/>
    <lineage>
        <taxon>Eukaryota</taxon>
        <taxon>Fungi</taxon>
        <taxon>Dikarya</taxon>
        <taxon>Ascomycota</taxon>
        <taxon>Saccharomycotina</taxon>
        <taxon>Dipodascomycetes</taxon>
        <taxon>Dipodascales</taxon>
        <taxon>Dipodascales incertae sedis</taxon>
        <taxon>Yarrowia</taxon>
    </lineage>
</organism>
<reference key="1">
    <citation type="journal article" date="2002" name="Eukaryot. Cell">
        <title>Isolation and characterization of YlBEM1, a gene required for cell polarization and differentiation in the dimorphic yeast Yarrowia lipolytica.</title>
        <authorList>
            <person name="Hurtado C.A."/>
            <person name="Rachubinski R.A."/>
        </authorList>
    </citation>
    <scope>NUCLEOTIDE SEQUENCE [GENOMIC DNA]</scope>
    <source>
        <strain>E 122</strain>
    </source>
</reference>
<reference key="2">
    <citation type="journal article" date="2004" name="Nature">
        <title>Genome evolution in yeasts.</title>
        <authorList>
            <person name="Dujon B."/>
            <person name="Sherman D."/>
            <person name="Fischer G."/>
            <person name="Durrens P."/>
            <person name="Casaregola S."/>
            <person name="Lafontaine I."/>
            <person name="de Montigny J."/>
            <person name="Marck C."/>
            <person name="Neuveglise C."/>
            <person name="Talla E."/>
            <person name="Goffard N."/>
            <person name="Frangeul L."/>
            <person name="Aigle M."/>
            <person name="Anthouard V."/>
            <person name="Babour A."/>
            <person name="Barbe V."/>
            <person name="Barnay S."/>
            <person name="Blanchin S."/>
            <person name="Beckerich J.-M."/>
            <person name="Beyne E."/>
            <person name="Bleykasten C."/>
            <person name="Boisrame A."/>
            <person name="Boyer J."/>
            <person name="Cattolico L."/>
            <person name="Confanioleri F."/>
            <person name="de Daruvar A."/>
            <person name="Despons L."/>
            <person name="Fabre E."/>
            <person name="Fairhead C."/>
            <person name="Ferry-Dumazet H."/>
            <person name="Groppi A."/>
            <person name="Hantraye F."/>
            <person name="Hennequin C."/>
            <person name="Jauniaux N."/>
            <person name="Joyet P."/>
            <person name="Kachouri R."/>
            <person name="Kerrest A."/>
            <person name="Koszul R."/>
            <person name="Lemaire M."/>
            <person name="Lesur I."/>
            <person name="Ma L."/>
            <person name="Muller H."/>
            <person name="Nicaud J.-M."/>
            <person name="Nikolski M."/>
            <person name="Oztas S."/>
            <person name="Ozier-Kalogeropoulos O."/>
            <person name="Pellenz S."/>
            <person name="Potier S."/>
            <person name="Richard G.-F."/>
            <person name="Straub M.-L."/>
            <person name="Suleau A."/>
            <person name="Swennen D."/>
            <person name="Tekaia F."/>
            <person name="Wesolowski-Louvel M."/>
            <person name="Westhof E."/>
            <person name="Wirth B."/>
            <person name="Zeniou-Meyer M."/>
            <person name="Zivanovic Y."/>
            <person name="Bolotin-Fukuhara M."/>
            <person name="Thierry A."/>
            <person name="Bouchier C."/>
            <person name="Caudron B."/>
            <person name="Scarpelli C."/>
            <person name="Gaillardin C."/>
            <person name="Weissenbach J."/>
            <person name="Wincker P."/>
            <person name="Souciet J.-L."/>
        </authorList>
    </citation>
    <scope>NUCLEOTIDE SEQUENCE [LARGE SCALE GENOMIC DNA]</scope>
    <source>
        <strain>CLIB 122 / E 150</strain>
    </source>
</reference>
<proteinExistence type="inferred from homology"/>
<accession>Q6C414</accession>
<accession>Q8J0E5</accession>
<keyword id="KW-0968">Cytoplasmic vesicle</keyword>
<keyword id="KW-0256">Endoplasmic reticulum</keyword>
<keyword id="KW-0931">ER-Golgi transport</keyword>
<keyword id="KW-0472">Membrane</keyword>
<keyword id="KW-0653">Protein transport</keyword>
<keyword id="KW-1185">Reference proteome</keyword>
<keyword id="KW-0677">Repeat</keyword>
<keyword id="KW-0813">Transport</keyword>
<keyword id="KW-0853">WD repeat</keyword>
<sequence length="1184" mass="125002">MKLKEIDRTATFAWSPNNLRIATGTVAGTVDADFSSSSQLEIWDVDLMDRSSEGFRLTKPAVSISADTRFHDLVWHNTGKHSLIVGATESGSLEVWEADNIKDSSTSVSVKEHSGPIKTLQFDPHNPTRLVSGGTKGEIFVWDLSDPKKPIAKKLGTDNKAGDIESLAFNNITRNILATSSSNGITTIWNVDQNKELTRVKHDKPVSHVVWHPSKPTKLITAVADDAEPVMLIWDLKNANAPEGVLQGHSKGILSVDWCQLDPRFLLSCGKDNRTLLWNPDTHECLGEYGAAQNWTFKTKLNERTPDLFATASFEGKIVIQTLQDVNGGDAPAQEGDFFQNLGTQSQAKISLKQAPSWLQRPVSNSFGFGGKIVTVTTTDGKSTVQVGKFVGDKVDTESIEVVLKGDLTSAFDEVKGAEWKVLEALSKGTDEVRSFLDIPVMKEEPAVEDDSEDVFSKMSPSGAFSLESSDPINQAIINGNLSTAVDLCLKEDRLLDAFALAEKASDAVKTKVQNAYFAKQTSSTARLLNAVNTNKLDDVVENANLKDWKEILALLYTYGGAQFGDLAAALGDRLRESDRDNAATCYLVSGKLDKVSGLWESEITTREKELTKDNVAPYTAHFSALKEFIEKISVFRKATNAVDSGTVDGLYNKYREFANIVASQGNLELAQQFLALLPASFEGVGLERERLNKAAKPSVATTATSKASAYGKPSYGSATPQASAYTPTASAYGSMYAPAVPAAAAPAAAAPPPTAAAVPPSPAKNMYAPQPPAPVTGFAPAAQSPGAPQQNTHNPYNPTPQTNAYAPQGNAYSAAPQQNTYGRSTPGGGPVRTTAPRHDTAGYNDLPAGSVPPPKKSAPSPGPISSAYAPPTPAAPSAPPAGGPRPPSVNRVTSPGVPSGGVNAYGFPIGGAPSPYGAQAAYGARPPVPAVVSPPPPNPYAPAHSPAQNNVQPAVNPYAPAPGAVVSPPPVHAGIVPPPAQRSAPSNPYAPAPGAGAPPASNPYAPPTGGFTGAPAPHAGGGYTAPPPAQVAPPPAGPPRNSVAPPPGGPARNPVPSSPAPPPAAAKHPAGDRTHIPATSRPIFDTLSTQWAGLKPHIPEQYSKHVRDAEKRLNILYDHLNNDDAQPEMVEDLLKLSNAIAQRDFPTAQALQLQIATARPDECGKWMVGLKRFVEMAAAVRTW</sequence>
<gene>
    <name type="primary">SEC31</name>
    <name type="ordered locus">YALI0E30635g</name>
</gene>
<comment type="function">
    <text evidence="1">Component of the coat protein complex II (COPII) which promotes the formation of transport vesicles from the endoplasmic reticulum (ER). The coat has two main functions, the physical deformation of the endoplasmic reticulum membrane into vesicles and the selection of cargo molecules (By similarity).</text>
</comment>
<comment type="subunit">
    <text evidence="1">The COPII coat is composed of at least 5 proteins: the SEC23/24 complex, the SEC13/31 complex, and the protein SAR1. SEC13 and SEC31 make a 2:2 tetramer that forms the edge element of the COPII outer coat. The tetramer self-assembles in multiple copies to form the complete polyhedral cage. Interacts (via WD 8) with SEC13 (By similarity).</text>
</comment>
<comment type="subcellular location">
    <subcellularLocation>
        <location evidence="1">Cytoplasmic vesicle</location>
        <location evidence="1">COPII-coated vesicle membrane</location>
        <topology evidence="1">Peripheral membrane protein</topology>
        <orientation evidence="1">Cytoplasmic side</orientation>
    </subcellularLocation>
    <subcellularLocation>
        <location evidence="1">Endoplasmic reticulum membrane</location>
        <topology evidence="1">Peripheral membrane protein</topology>
        <orientation evidence="1">Cytoplasmic side</orientation>
    </subcellularLocation>
</comment>
<comment type="similarity">
    <text evidence="4">Belongs to the WD repeat SEC31 family.</text>
</comment>
<comment type="sequence caution" evidence="4">
    <conflict type="erroneous gene model prediction">
        <sequence resource="EMBL-CDS" id="AAM09808"/>
    </conflict>
</comment>
<feature type="chain" id="PRO_0000295448" description="Protein transport protein SEC31">
    <location>
        <begin position="1"/>
        <end position="1184"/>
    </location>
</feature>
<feature type="repeat" description="WD 1">
    <location>
        <begin position="4"/>
        <end position="44"/>
    </location>
</feature>
<feature type="repeat" description="WD 2">
    <location>
        <begin position="65"/>
        <end position="106"/>
    </location>
</feature>
<feature type="repeat" description="WD 3">
    <location>
        <begin position="112"/>
        <end position="152"/>
    </location>
</feature>
<feature type="repeat" description="WD 4">
    <location>
        <begin position="159"/>
        <end position="199"/>
    </location>
</feature>
<feature type="repeat" description="WD 5">
    <location>
        <begin position="201"/>
        <end position="244"/>
    </location>
</feature>
<feature type="repeat" description="WD 6">
    <location>
        <begin position="248"/>
        <end position="288"/>
    </location>
</feature>
<feature type="repeat" description="WD 7">
    <location>
        <begin position="291"/>
        <end position="331"/>
    </location>
</feature>
<feature type="repeat" description="WD 8; interaction with SEC13" evidence="2">
    <location>
        <begin position="366"/>
        <end position="388"/>
    </location>
</feature>
<feature type="region of interest" description="Disordered" evidence="3">
    <location>
        <begin position="692"/>
        <end position="723"/>
    </location>
</feature>
<feature type="region of interest" description="Disordered" evidence="3">
    <location>
        <begin position="751"/>
        <end position="1079"/>
    </location>
</feature>
<feature type="compositionally biased region" description="Low complexity" evidence="3">
    <location>
        <begin position="695"/>
        <end position="710"/>
    </location>
</feature>
<feature type="compositionally biased region" description="Pro residues" evidence="3">
    <location>
        <begin position="751"/>
        <end position="763"/>
    </location>
</feature>
<feature type="compositionally biased region" description="Low complexity" evidence="3">
    <location>
        <begin position="780"/>
        <end position="791"/>
    </location>
</feature>
<feature type="compositionally biased region" description="Polar residues" evidence="3">
    <location>
        <begin position="792"/>
        <end position="806"/>
    </location>
</feature>
<feature type="compositionally biased region" description="Pro residues" evidence="3">
    <location>
        <begin position="851"/>
        <end position="863"/>
    </location>
</feature>
<feature type="compositionally biased region" description="Pro residues" evidence="3">
    <location>
        <begin position="871"/>
        <end position="888"/>
    </location>
</feature>
<feature type="compositionally biased region" description="Pro residues" evidence="3">
    <location>
        <begin position="927"/>
        <end position="941"/>
    </location>
</feature>
<feature type="compositionally biased region" description="Low complexity" evidence="3">
    <location>
        <begin position="958"/>
        <end position="967"/>
    </location>
</feature>
<feature type="compositionally biased region" description="Pro residues" evidence="3">
    <location>
        <begin position="968"/>
        <end position="981"/>
    </location>
</feature>
<feature type="compositionally biased region" description="Low complexity" evidence="3">
    <location>
        <begin position="985"/>
        <end position="1000"/>
    </location>
</feature>
<feature type="compositionally biased region" description="Low complexity" evidence="3">
    <location>
        <begin position="1008"/>
        <end position="1019"/>
    </location>
</feature>
<feature type="compositionally biased region" description="Pro residues" evidence="3">
    <location>
        <begin position="1026"/>
        <end position="1050"/>
    </location>
</feature>
<evidence type="ECO:0000250" key="1"/>
<evidence type="ECO:0000255" key="2">
    <source>
        <dbReference type="PROSITE-ProRule" id="PRU00221"/>
    </source>
</evidence>
<evidence type="ECO:0000256" key="3">
    <source>
        <dbReference type="SAM" id="MobiDB-lite"/>
    </source>
</evidence>
<evidence type="ECO:0000305" key="4"/>